<organism>
    <name type="scientific">Acidiphilium cryptum (strain JF-5)</name>
    <dbReference type="NCBI Taxonomy" id="349163"/>
    <lineage>
        <taxon>Bacteria</taxon>
        <taxon>Pseudomonadati</taxon>
        <taxon>Pseudomonadota</taxon>
        <taxon>Alphaproteobacteria</taxon>
        <taxon>Acetobacterales</taxon>
        <taxon>Acidocellaceae</taxon>
        <taxon>Acidiphilium</taxon>
    </lineage>
</organism>
<evidence type="ECO:0000250" key="1"/>
<evidence type="ECO:0000255" key="2">
    <source>
        <dbReference type="HAMAP-Rule" id="MF_00118"/>
    </source>
</evidence>
<comment type="function">
    <text evidence="2">GTP hydrolase that promotes the GTP-dependent binding of aminoacyl-tRNA to the A-site of ribosomes during protein biosynthesis.</text>
</comment>
<comment type="catalytic activity">
    <reaction evidence="2">
        <text>GTP + H2O = GDP + phosphate + H(+)</text>
        <dbReference type="Rhea" id="RHEA:19669"/>
        <dbReference type="ChEBI" id="CHEBI:15377"/>
        <dbReference type="ChEBI" id="CHEBI:15378"/>
        <dbReference type="ChEBI" id="CHEBI:37565"/>
        <dbReference type="ChEBI" id="CHEBI:43474"/>
        <dbReference type="ChEBI" id="CHEBI:58189"/>
        <dbReference type="EC" id="3.6.5.3"/>
    </reaction>
    <physiologicalReaction direction="left-to-right" evidence="2">
        <dbReference type="Rhea" id="RHEA:19670"/>
    </physiologicalReaction>
</comment>
<comment type="subunit">
    <text evidence="2">Monomer.</text>
</comment>
<comment type="subcellular location">
    <subcellularLocation>
        <location>Cytoplasm</location>
    </subcellularLocation>
</comment>
<comment type="similarity">
    <text evidence="2">Belongs to the TRAFAC class translation factor GTPase superfamily. Classic translation factor GTPase family. EF-Tu/EF-1A subfamily.</text>
</comment>
<gene>
    <name evidence="2" type="primary">tuf</name>
    <name type="ordered locus">Acry_1948</name>
</gene>
<protein>
    <recommendedName>
        <fullName evidence="2">Elongation factor Tu</fullName>
        <shortName evidence="2">EF-Tu</shortName>
        <ecNumber evidence="2">3.6.5.3</ecNumber>
    </recommendedName>
</protein>
<dbReference type="EC" id="3.6.5.3" evidence="2"/>
<dbReference type="EMBL" id="CP000697">
    <property type="protein sequence ID" value="ABQ31149.1"/>
    <property type="molecule type" value="Genomic_DNA"/>
</dbReference>
<dbReference type="RefSeq" id="WP_007424171.1">
    <property type="nucleotide sequence ID" value="NC_009484.1"/>
</dbReference>
<dbReference type="SMR" id="A5FZW7"/>
<dbReference type="STRING" id="349163.Acry_1948"/>
<dbReference type="KEGG" id="acr:Acry_1948"/>
<dbReference type="eggNOG" id="COG0050">
    <property type="taxonomic scope" value="Bacteria"/>
</dbReference>
<dbReference type="HOGENOM" id="CLU_007265_0_1_5"/>
<dbReference type="Proteomes" id="UP000000245">
    <property type="component" value="Chromosome"/>
</dbReference>
<dbReference type="GO" id="GO:0005829">
    <property type="term" value="C:cytosol"/>
    <property type="evidence" value="ECO:0007669"/>
    <property type="project" value="TreeGrafter"/>
</dbReference>
<dbReference type="GO" id="GO:0005525">
    <property type="term" value="F:GTP binding"/>
    <property type="evidence" value="ECO:0007669"/>
    <property type="project" value="UniProtKB-UniRule"/>
</dbReference>
<dbReference type="GO" id="GO:0003924">
    <property type="term" value="F:GTPase activity"/>
    <property type="evidence" value="ECO:0007669"/>
    <property type="project" value="InterPro"/>
</dbReference>
<dbReference type="GO" id="GO:0097216">
    <property type="term" value="F:guanosine tetraphosphate binding"/>
    <property type="evidence" value="ECO:0007669"/>
    <property type="project" value="UniProtKB-ARBA"/>
</dbReference>
<dbReference type="GO" id="GO:0003746">
    <property type="term" value="F:translation elongation factor activity"/>
    <property type="evidence" value="ECO:0007669"/>
    <property type="project" value="UniProtKB-UniRule"/>
</dbReference>
<dbReference type="CDD" id="cd01884">
    <property type="entry name" value="EF_Tu"/>
    <property type="match status" value="1"/>
</dbReference>
<dbReference type="CDD" id="cd03697">
    <property type="entry name" value="EFTU_II"/>
    <property type="match status" value="1"/>
</dbReference>
<dbReference type="CDD" id="cd03707">
    <property type="entry name" value="EFTU_III"/>
    <property type="match status" value="1"/>
</dbReference>
<dbReference type="FunFam" id="2.40.30.10:FF:000001">
    <property type="entry name" value="Elongation factor Tu"/>
    <property type="match status" value="1"/>
</dbReference>
<dbReference type="FunFam" id="3.40.50.300:FF:000003">
    <property type="entry name" value="Elongation factor Tu"/>
    <property type="match status" value="1"/>
</dbReference>
<dbReference type="Gene3D" id="3.40.50.300">
    <property type="entry name" value="P-loop containing nucleotide triphosphate hydrolases"/>
    <property type="match status" value="1"/>
</dbReference>
<dbReference type="Gene3D" id="2.40.30.10">
    <property type="entry name" value="Translation factors"/>
    <property type="match status" value="2"/>
</dbReference>
<dbReference type="HAMAP" id="MF_00118_B">
    <property type="entry name" value="EF_Tu_B"/>
    <property type="match status" value="1"/>
</dbReference>
<dbReference type="InterPro" id="IPR041709">
    <property type="entry name" value="EF-Tu_GTP-bd"/>
</dbReference>
<dbReference type="InterPro" id="IPR050055">
    <property type="entry name" value="EF-Tu_GTPase"/>
</dbReference>
<dbReference type="InterPro" id="IPR004161">
    <property type="entry name" value="EFTu-like_2"/>
</dbReference>
<dbReference type="InterPro" id="IPR033720">
    <property type="entry name" value="EFTU_2"/>
</dbReference>
<dbReference type="InterPro" id="IPR031157">
    <property type="entry name" value="G_TR_CS"/>
</dbReference>
<dbReference type="InterPro" id="IPR027417">
    <property type="entry name" value="P-loop_NTPase"/>
</dbReference>
<dbReference type="InterPro" id="IPR005225">
    <property type="entry name" value="Small_GTP-bd"/>
</dbReference>
<dbReference type="InterPro" id="IPR000795">
    <property type="entry name" value="T_Tr_GTP-bd_dom"/>
</dbReference>
<dbReference type="InterPro" id="IPR009000">
    <property type="entry name" value="Transl_B-barrel_sf"/>
</dbReference>
<dbReference type="InterPro" id="IPR009001">
    <property type="entry name" value="Transl_elong_EF1A/Init_IF2_C"/>
</dbReference>
<dbReference type="InterPro" id="IPR004541">
    <property type="entry name" value="Transl_elong_EFTu/EF1A_bac/org"/>
</dbReference>
<dbReference type="InterPro" id="IPR004160">
    <property type="entry name" value="Transl_elong_EFTu/EF1A_C"/>
</dbReference>
<dbReference type="NCBIfam" id="TIGR00485">
    <property type="entry name" value="EF-Tu"/>
    <property type="match status" value="1"/>
</dbReference>
<dbReference type="NCBIfam" id="NF000766">
    <property type="entry name" value="PRK00049.1"/>
    <property type="match status" value="1"/>
</dbReference>
<dbReference type="NCBIfam" id="NF009372">
    <property type="entry name" value="PRK12735.1"/>
    <property type="match status" value="1"/>
</dbReference>
<dbReference type="NCBIfam" id="NF009373">
    <property type="entry name" value="PRK12736.1"/>
    <property type="match status" value="1"/>
</dbReference>
<dbReference type="NCBIfam" id="TIGR00231">
    <property type="entry name" value="small_GTP"/>
    <property type="match status" value="1"/>
</dbReference>
<dbReference type="PANTHER" id="PTHR43721:SF22">
    <property type="entry name" value="ELONGATION FACTOR TU, MITOCHONDRIAL"/>
    <property type="match status" value="1"/>
</dbReference>
<dbReference type="PANTHER" id="PTHR43721">
    <property type="entry name" value="ELONGATION FACTOR TU-RELATED"/>
    <property type="match status" value="1"/>
</dbReference>
<dbReference type="Pfam" id="PF00009">
    <property type="entry name" value="GTP_EFTU"/>
    <property type="match status" value="1"/>
</dbReference>
<dbReference type="Pfam" id="PF03144">
    <property type="entry name" value="GTP_EFTU_D2"/>
    <property type="match status" value="1"/>
</dbReference>
<dbReference type="Pfam" id="PF03143">
    <property type="entry name" value="GTP_EFTU_D3"/>
    <property type="match status" value="1"/>
</dbReference>
<dbReference type="PRINTS" id="PR00315">
    <property type="entry name" value="ELONGATNFCT"/>
</dbReference>
<dbReference type="SUPFAM" id="SSF50465">
    <property type="entry name" value="EF-Tu/eEF-1alpha/eIF2-gamma C-terminal domain"/>
    <property type="match status" value="1"/>
</dbReference>
<dbReference type="SUPFAM" id="SSF52540">
    <property type="entry name" value="P-loop containing nucleoside triphosphate hydrolases"/>
    <property type="match status" value="1"/>
</dbReference>
<dbReference type="SUPFAM" id="SSF50447">
    <property type="entry name" value="Translation proteins"/>
    <property type="match status" value="1"/>
</dbReference>
<dbReference type="PROSITE" id="PS00301">
    <property type="entry name" value="G_TR_1"/>
    <property type="match status" value="1"/>
</dbReference>
<dbReference type="PROSITE" id="PS51722">
    <property type="entry name" value="G_TR_2"/>
    <property type="match status" value="1"/>
</dbReference>
<proteinExistence type="inferred from homology"/>
<sequence length="395" mass="42629">MAKAKFERTKPHCNIGTIGHVDHGKTSLTAAITKVLAESGGATFRAYDSIDAAPEERARGITIATAHVEYETANRHYAHVDCPGHADYVKNMITGAAQMDGAILVVSAADGPMPQTREHILLARQVGVPALVVFLNKMDMADPDLVELVEMEVRDLLSKYEFPGDDIPIIKGSALCALEDSNAELGREAILKLMEAVDSYIPQPERPKDKPFLMPVEDVFSISGRGTVVTGRVERGIIKVGDEVEIVGLKATVKTTVTGVEMFRKLLDQGEAGDNIGALLRGTKREDVERGQVLAAPGSITPHTNFSGSVYILNKEEGGRHTPFFTNYRPQFYFRTTDVTGVVTLPEGVEMVMPGDNVTVSVELIAPIAMDEGLRFAIREGGRTVGSGVVASITK</sequence>
<reference key="1">
    <citation type="submission" date="2007-05" db="EMBL/GenBank/DDBJ databases">
        <title>Complete sequence of chromosome of Acidiphilium cryptum JF-5.</title>
        <authorList>
            <consortium name="US DOE Joint Genome Institute"/>
            <person name="Copeland A."/>
            <person name="Lucas S."/>
            <person name="Lapidus A."/>
            <person name="Barry K."/>
            <person name="Detter J.C."/>
            <person name="Glavina del Rio T."/>
            <person name="Hammon N."/>
            <person name="Israni S."/>
            <person name="Dalin E."/>
            <person name="Tice H."/>
            <person name="Pitluck S."/>
            <person name="Sims D."/>
            <person name="Brettin T."/>
            <person name="Bruce D."/>
            <person name="Han C."/>
            <person name="Schmutz J."/>
            <person name="Larimer F."/>
            <person name="Land M."/>
            <person name="Hauser L."/>
            <person name="Kyrpides N."/>
            <person name="Kim E."/>
            <person name="Magnuson T."/>
            <person name="Richardson P."/>
        </authorList>
    </citation>
    <scope>NUCLEOTIDE SEQUENCE [LARGE SCALE GENOMIC DNA]</scope>
    <source>
        <strain>JF-5</strain>
    </source>
</reference>
<feature type="chain" id="PRO_1000015598" description="Elongation factor Tu">
    <location>
        <begin position="1"/>
        <end position="395"/>
    </location>
</feature>
<feature type="domain" description="tr-type G">
    <location>
        <begin position="10"/>
        <end position="205"/>
    </location>
</feature>
<feature type="region of interest" description="G1" evidence="1">
    <location>
        <begin position="19"/>
        <end position="26"/>
    </location>
</feature>
<feature type="region of interest" description="G2" evidence="1">
    <location>
        <begin position="60"/>
        <end position="64"/>
    </location>
</feature>
<feature type="region of interest" description="G3" evidence="1">
    <location>
        <begin position="81"/>
        <end position="84"/>
    </location>
</feature>
<feature type="region of interest" description="G4" evidence="1">
    <location>
        <begin position="136"/>
        <end position="139"/>
    </location>
</feature>
<feature type="region of interest" description="G5" evidence="1">
    <location>
        <begin position="173"/>
        <end position="175"/>
    </location>
</feature>
<feature type="binding site" evidence="2">
    <location>
        <begin position="19"/>
        <end position="26"/>
    </location>
    <ligand>
        <name>GTP</name>
        <dbReference type="ChEBI" id="CHEBI:37565"/>
    </ligand>
</feature>
<feature type="binding site" evidence="2">
    <location>
        <position position="26"/>
    </location>
    <ligand>
        <name>Mg(2+)</name>
        <dbReference type="ChEBI" id="CHEBI:18420"/>
    </ligand>
</feature>
<feature type="binding site" evidence="2">
    <location>
        <begin position="81"/>
        <end position="85"/>
    </location>
    <ligand>
        <name>GTP</name>
        <dbReference type="ChEBI" id="CHEBI:37565"/>
    </ligand>
</feature>
<feature type="binding site" evidence="2">
    <location>
        <begin position="136"/>
        <end position="139"/>
    </location>
    <ligand>
        <name>GTP</name>
        <dbReference type="ChEBI" id="CHEBI:37565"/>
    </ligand>
</feature>
<accession>A5FZW7</accession>
<name>EFTU_ACICJ</name>
<keyword id="KW-0963">Cytoplasm</keyword>
<keyword id="KW-0251">Elongation factor</keyword>
<keyword id="KW-0342">GTP-binding</keyword>
<keyword id="KW-0378">Hydrolase</keyword>
<keyword id="KW-0460">Magnesium</keyword>
<keyword id="KW-0479">Metal-binding</keyword>
<keyword id="KW-0547">Nucleotide-binding</keyword>
<keyword id="KW-0648">Protein biosynthesis</keyword>
<keyword id="KW-1185">Reference proteome</keyword>